<sequence>MSEKYVVTWDMLQIHARKLASRLMPSEQWKGIIAVSRGGLVPGALLARELGIRHVDTVCISSYDHDNQRELKVLKRAEGDGEGFIVIDDLVDTGGTAVAIREMYPKAHFVTIFAKPAGRPLVDDYVIDIPQNTWIEQPWDMGVVFVPPISGR</sequence>
<proteinExistence type="inferred from homology"/>
<reference key="1">
    <citation type="journal article" date="2011" name="J. Bacteriol.">
        <title>Comparative genomics of 28 Salmonella enterica isolates: evidence for CRISPR-mediated adaptive sublineage evolution.</title>
        <authorList>
            <person name="Fricke W.F."/>
            <person name="Mammel M.K."/>
            <person name="McDermott P.F."/>
            <person name="Tartera C."/>
            <person name="White D.G."/>
            <person name="Leclerc J.E."/>
            <person name="Ravel J."/>
            <person name="Cebula T.A."/>
        </authorList>
    </citation>
    <scope>NUCLEOTIDE SEQUENCE [LARGE SCALE GENOMIC DNA]</scope>
    <source>
        <strain>CVM19633</strain>
    </source>
</reference>
<gene>
    <name evidence="1" type="primary">gpt</name>
    <name type="ordered locus">SeSA_A0366</name>
</gene>
<comment type="function">
    <text evidence="1">Purine salvage pathway enzyme that catalyzes the transfer of the ribosyl-5-phosphate group from 5-phospho-alpha-D-ribose 1-diphosphate (PRPP) to the N9 position of the 6-oxopurines guanine and xanthine to form the corresponding ribonucleotides GMP (guanosine 5'-monophosphate) and XMP (xanthosine 5'-monophosphate), with the release of PPi. To a lesser extent, also acts on hypoxanthine.</text>
</comment>
<comment type="catalytic activity">
    <reaction evidence="1">
        <text>GMP + diphosphate = guanine + 5-phospho-alpha-D-ribose 1-diphosphate</text>
        <dbReference type="Rhea" id="RHEA:25424"/>
        <dbReference type="ChEBI" id="CHEBI:16235"/>
        <dbReference type="ChEBI" id="CHEBI:33019"/>
        <dbReference type="ChEBI" id="CHEBI:58017"/>
        <dbReference type="ChEBI" id="CHEBI:58115"/>
    </reaction>
    <physiologicalReaction direction="right-to-left" evidence="1">
        <dbReference type="Rhea" id="RHEA:25426"/>
    </physiologicalReaction>
</comment>
<comment type="catalytic activity">
    <reaction evidence="1">
        <text>XMP + diphosphate = xanthine + 5-phospho-alpha-D-ribose 1-diphosphate</text>
        <dbReference type="Rhea" id="RHEA:10800"/>
        <dbReference type="ChEBI" id="CHEBI:17712"/>
        <dbReference type="ChEBI" id="CHEBI:33019"/>
        <dbReference type="ChEBI" id="CHEBI:57464"/>
        <dbReference type="ChEBI" id="CHEBI:58017"/>
        <dbReference type="EC" id="2.4.2.22"/>
    </reaction>
    <physiologicalReaction direction="right-to-left" evidence="1">
        <dbReference type="Rhea" id="RHEA:10802"/>
    </physiologicalReaction>
</comment>
<comment type="catalytic activity">
    <reaction evidence="1">
        <text>IMP + diphosphate = hypoxanthine + 5-phospho-alpha-D-ribose 1-diphosphate</text>
        <dbReference type="Rhea" id="RHEA:17973"/>
        <dbReference type="ChEBI" id="CHEBI:17368"/>
        <dbReference type="ChEBI" id="CHEBI:33019"/>
        <dbReference type="ChEBI" id="CHEBI:58017"/>
        <dbReference type="ChEBI" id="CHEBI:58053"/>
    </reaction>
    <physiologicalReaction direction="right-to-left" evidence="1">
        <dbReference type="Rhea" id="RHEA:17975"/>
    </physiologicalReaction>
</comment>
<comment type="cofactor">
    <cofactor evidence="1">
        <name>Mg(2+)</name>
        <dbReference type="ChEBI" id="CHEBI:18420"/>
    </cofactor>
</comment>
<comment type="pathway">
    <text evidence="1">Purine metabolism; GMP biosynthesis via salvage pathway; GMP from guanine: step 1/1.</text>
</comment>
<comment type="pathway">
    <text evidence="1">Purine metabolism; XMP biosynthesis via salvage pathway; XMP from xanthine: step 1/1.</text>
</comment>
<comment type="subunit">
    <text evidence="1">Homotetramer.</text>
</comment>
<comment type="subcellular location">
    <subcellularLocation>
        <location evidence="1">Cell inner membrane</location>
        <topology evidence="1">Peripheral membrane protein</topology>
    </subcellularLocation>
</comment>
<comment type="similarity">
    <text evidence="1">Belongs to the purine/pyrimidine phosphoribosyltransferase family. XGPT subfamily.</text>
</comment>
<dbReference type="EC" id="2.4.2.-" evidence="1"/>
<dbReference type="EC" id="2.4.2.22" evidence="1"/>
<dbReference type="EMBL" id="CP001127">
    <property type="protein sequence ID" value="ACF89696.1"/>
    <property type="molecule type" value="Genomic_DNA"/>
</dbReference>
<dbReference type="RefSeq" id="WP_001292018.1">
    <property type="nucleotide sequence ID" value="NC_011094.1"/>
</dbReference>
<dbReference type="SMR" id="B4TZ85"/>
<dbReference type="GeneID" id="66754798"/>
<dbReference type="KEGG" id="sew:SeSA_A0366"/>
<dbReference type="HOGENOM" id="CLU_080904_3_0_6"/>
<dbReference type="UniPathway" id="UPA00602">
    <property type="reaction ID" value="UER00658"/>
</dbReference>
<dbReference type="UniPathway" id="UPA00909">
    <property type="reaction ID" value="UER00887"/>
</dbReference>
<dbReference type="Proteomes" id="UP000001865">
    <property type="component" value="Chromosome"/>
</dbReference>
<dbReference type="GO" id="GO:0005829">
    <property type="term" value="C:cytosol"/>
    <property type="evidence" value="ECO:0007669"/>
    <property type="project" value="TreeGrafter"/>
</dbReference>
<dbReference type="GO" id="GO:0005886">
    <property type="term" value="C:plasma membrane"/>
    <property type="evidence" value="ECO:0007669"/>
    <property type="project" value="UniProtKB-SubCell"/>
</dbReference>
<dbReference type="GO" id="GO:0052657">
    <property type="term" value="F:guanine phosphoribosyltransferase activity"/>
    <property type="evidence" value="ECO:0007669"/>
    <property type="project" value="RHEA"/>
</dbReference>
<dbReference type="GO" id="GO:0004422">
    <property type="term" value="F:hypoxanthine phosphoribosyltransferase activity"/>
    <property type="evidence" value="ECO:0007669"/>
    <property type="project" value="RHEA"/>
</dbReference>
<dbReference type="GO" id="GO:0000287">
    <property type="term" value="F:magnesium ion binding"/>
    <property type="evidence" value="ECO:0007669"/>
    <property type="project" value="UniProtKB-UniRule"/>
</dbReference>
<dbReference type="GO" id="GO:0000310">
    <property type="term" value="F:xanthine phosphoribosyltransferase activity"/>
    <property type="evidence" value="ECO:0007669"/>
    <property type="project" value="UniProtKB-UniRule"/>
</dbReference>
<dbReference type="GO" id="GO:0032263">
    <property type="term" value="P:GMP salvage"/>
    <property type="evidence" value="ECO:0007669"/>
    <property type="project" value="UniProtKB-UniRule"/>
</dbReference>
<dbReference type="GO" id="GO:0032264">
    <property type="term" value="P:IMP salvage"/>
    <property type="evidence" value="ECO:0007669"/>
    <property type="project" value="TreeGrafter"/>
</dbReference>
<dbReference type="GO" id="GO:0006166">
    <property type="term" value="P:purine ribonucleoside salvage"/>
    <property type="evidence" value="ECO:0007669"/>
    <property type="project" value="UniProtKB-KW"/>
</dbReference>
<dbReference type="GO" id="GO:0032265">
    <property type="term" value="P:XMP salvage"/>
    <property type="evidence" value="ECO:0007669"/>
    <property type="project" value="UniProtKB-UniRule"/>
</dbReference>
<dbReference type="CDD" id="cd06223">
    <property type="entry name" value="PRTases_typeI"/>
    <property type="match status" value="1"/>
</dbReference>
<dbReference type="FunFam" id="3.40.50.2020:FF:000009">
    <property type="entry name" value="Xanthine phosphoribosyltransferase"/>
    <property type="match status" value="1"/>
</dbReference>
<dbReference type="Gene3D" id="3.40.50.2020">
    <property type="match status" value="1"/>
</dbReference>
<dbReference type="HAMAP" id="MF_01903">
    <property type="entry name" value="XGPRT"/>
    <property type="match status" value="1"/>
</dbReference>
<dbReference type="InterPro" id="IPR000836">
    <property type="entry name" value="PRibTrfase_dom"/>
</dbReference>
<dbReference type="InterPro" id="IPR029057">
    <property type="entry name" value="PRTase-like"/>
</dbReference>
<dbReference type="InterPro" id="IPR023747">
    <property type="entry name" value="Xanthine_Guanine_PRibTrfase"/>
</dbReference>
<dbReference type="NCBIfam" id="NF006613">
    <property type="entry name" value="PRK09177.1"/>
    <property type="match status" value="1"/>
</dbReference>
<dbReference type="PANTHER" id="PTHR39563">
    <property type="entry name" value="XANTHINE PHOSPHORIBOSYLTRANSFERASE"/>
    <property type="match status" value="1"/>
</dbReference>
<dbReference type="PANTHER" id="PTHR39563:SF1">
    <property type="entry name" value="XANTHINE-GUANINE PHOSPHORIBOSYLTRANSFERASE"/>
    <property type="match status" value="1"/>
</dbReference>
<dbReference type="Pfam" id="PF00156">
    <property type="entry name" value="Pribosyltran"/>
    <property type="match status" value="1"/>
</dbReference>
<dbReference type="SUPFAM" id="SSF53271">
    <property type="entry name" value="PRTase-like"/>
    <property type="match status" value="1"/>
</dbReference>
<dbReference type="PROSITE" id="PS00103">
    <property type="entry name" value="PUR_PYR_PR_TRANSFER"/>
    <property type="match status" value="1"/>
</dbReference>
<name>XGPT_SALSV</name>
<feature type="chain" id="PRO_1000188760" description="Xanthine-guanine phosphoribosyltransferase">
    <location>
        <begin position="1"/>
        <end position="152"/>
    </location>
</feature>
<feature type="binding site" evidence="1">
    <location>
        <begin position="37"/>
        <end position="38"/>
    </location>
    <ligand>
        <name>5-phospho-alpha-D-ribose 1-diphosphate</name>
        <dbReference type="ChEBI" id="CHEBI:58017"/>
    </ligand>
</feature>
<feature type="binding site" evidence="1">
    <location>
        <position position="69"/>
    </location>
    <ligand>
        <name>5-phospho-alpha-D-ribose 1-diphosphate</name>
        <dbReference type="ChEBI" id="CHEBI:58017"/>
    </ligand>
</feature>
<feature type="binding site" evidence="1">
    <location>
        <position position="69"/>
    </location>
    <ligand>
        <name>GMP</name>
        <dbReference type="ChEBI" id="CHEBI:58115"/>
    </ligand>
</feature>
<feature type="binding site" evidence="1">
    <location>
        <begin position="88"/>
        <end position="96"/>
    </location>
    <ligand>
        <name>5-phospho-alpha-D-ribose 1-diphosphate</name>
        <dbReference type="ChEBI" id="CHEBI:58017"/>
    </ligand>
</feature>
<feature type="binding site" evidence="1">
    <location>
        <position position="89"/>
    </location>
    <ligand>
        <name>Mg(2+)</name>
        <dbReference type="ChEBI" id="CHEBI:18420"/>
    </ligand>
</feature>
<feature type="binding site" evidence="1">
    <location>
        <begin position="92"/>
        <end position="96"/>
    </location>
    <ligand>
        <name>GMP</name>
        <dbReference type="ChEBI" id="CHEBI:58115"/>
    </ligand>
</feature>
<feature type="binding site" evidence="1">
    <location>
        <position position="92"/>
    </location>
    <ligand>
        <name>guanine</name>
        <dbReference type="ChEBI" id="CHEBI:16235"/>
    </ligand>
</feature>
<feature type="binding site" evidence="1">
    <location>
        <position position="92"/>
    </location>
    <ligand>
        <name>xanthine</name>
        <dbReference type="ChEBI" id="CHEBI:17712"/>
    </ligand>
</feature>
<feature type="binding site" evidence="1">
    <location>
        <begin position="134"/>
        <end position="135"/>
    </location>
    <ligand>
        <name>GMP</name>
        <dbReference type="ChEBI" id="CHEBI:58115"/>
    </ligand>
</feature>
<feature type="binding site" evidence="1">
    <location>
        <position position="135"/>
    </location>
    <ligand>
        <name>guanine</name>
        <dbReference type="ChEBI" id="CHEBI:16235"/>
    </ligand>
</feature>
<feature type="binding site" evidence="1">
    <location>
        <position position="135"/>
    </location>
    <ligand>
        <name>xanthine</name>
        <dbReference type="ChEBI" id="CHEBI:17712"/>
    </ligand>
</feature>
<protein>
    <recommendedName>
        <fullName evidence="1">Xanthine-guanine phosphoribosyltransferase</fullName>
        <shortName evidence="1">XGPRT</shortName>
        <ecNumber evidence="1">2.4.2.-</ecNumber>
        <ecNumber evidence="1">2.4.2.22</ecNumber>
    </recommendedName>
    <alternativeName>
        <fullName evidence="1">Xanthine phosphoribosyltransferase</fullName>
    </alternativeName>
</protein>
<keyword id="KW-0997">Cell inner membrane</keyword>
<keyword id="KW-1003">Cell membrane</keyword>
<keyword id="KW-0328">Glycosyltransferase</keyword>
<keyword id="KW-0460">Magnesium</keyword>
<keyword id="KW-0472">Membrane</keyword>
<keyword id="KW-0479">Metal-binding</keyword>
<keyword id="KW-0660">Purine salvage</keyword>
<keyword id="KW-0808">Transferase</keyword>
<accession>B4TZ85</accession>
<organism>
    <name type="scientific">Salmonella schwarzengrund (strain CVM19633)</name>
    <dbReference type="NCBI Taxonomy" id="439843"/>
    <lineage>
        <taxon>Bacteria</taxon>
        <taxon>Pseudomonadati</taxon>
        <taxon>Pseudomonadota</taxon>
        <taxon>Gammaproteobacteria</taxon>
        <taxon>Enterobacterales</taxon>
        <taxon>Enterobacteriaceae</taxon>
        <taxon>Salmonella</taxon>
    </lineage>
</organism>
<evidence type="ECO:0000255" key="1">
    <source>
        <dbReference type="HAMAP-Rule" id="MF_01903"/>
    </source>
</evidence>